<name>CYAA_BORBR</name>
<comment type="function">
    <text evidence="2">Bifunctional adenylate cyclase toxin-hemolysin that plays a crucial role in host colonization. It causes whooping cough by acting on mammalian cells by elevating cAMP-concentration and thus disrupts normal cell function.</text>
</comment>
<comment type="function">
    <molecule>Calmodulin-sensitive adenylate cyclase</molecule>
    <text evidence="2">Adenylate cyclase that is activated by host intracellular calmodulin and catalyzes un-regulated conversion of ATP to cAMP, thereby impairing microbicidal functions of immune effector cells and inducing apoptosis of lung macrophages.</text>
</comment>
<comment type="function">
    <molecule>Hemolysin</molecule>
    <text evidence="1 2">Hemolysin that forms small cation-selective membrane channels, leading to hemolytic activity (By similarity). The hemolytic activity of CyaA is weak compared with that of the HlyA of E.coli (By similarity).</text>
</comment>
<comment type="catalytic activity">
    <molecule>Calmodulin-sensitive adenylate cyclase</molecule>
    <reaction evidence="2">
        <text>ATP = 3',5'-cyclic AMP + diphosphate</text>
        <dbReference type="Rhea" id="RHEA:15389"/>
        <dbReference type="ChEBI" id="CHEBI:30616"/>
        <dbReference type="ChEBI" id="CHEBI:33019"/>
        <dbReference type="ChEBI" id="CHEBI:58165"/>
        <dbReference type="EC" id="4.6.1.1"/>
    </reaction>
</comment>
<comment type="activity regulation">
    <molecule>Calmodulin-sensitive adenylate cyclase</molecule>
    <text evidence="2">Activated by host calmodulin.</text>
</comment>
<comment type="subcellular location">
    <subcellularLocation>
        <location evidence="2">Secreted</location>
    </subcellularLocation>
</comment>
<comment type="subcellular location">
    <molecule>Hemolysin</molecule>
    <subcellularLocation>
        <location evidence="2">Host cell membrane</location>
        <topology evidence="2">Multi-pass membrane protein</topology>
    </subcellularLocation>
</comment>
<comment type="domain">
    <text>The Gly-rich region is probably involved in binding calcium, which is required for target cell-binding or cytolytic activity.</text>
</comment>
<comment type="PTM">
    <text evidence="2">Released in a processed form.</text>
</comment>
<comment type="PTM">
    <molecule>Hemolysin</molecule>
    <text evidence="2">Palmitoylated at Lys-860 and Lys-983 by CyaC. The toxin only becomes active when modified in position Lys-983: palmitoylation is required for efficient membrane insertion and pore formation of the acylated Hemolysin chain.</text>
</comment>
<comment type="similarity">
    <text evidence="5">In the N-terminal section; belongs to the adenylyl cyclase class-2 family.</text>
</comment>
<comment type="similarity">
    <text evidence="5">In the C-terminal section; belongs to the RTX prokaryotic toxin family.</text>
</comment>
<comment type="sequence caution" evidence="5">
    <conflict type="erroneous initiation">
        <sequence resource="EMBL-CDS" id="CAE30822"/>
    </conflict>
</comment>
<feature type="chain" id="PRO_0000001318" description="Calmodulin-sensitive adenylate cyclase">
    <location>
        <begin position="1"/>
        <end position="312"/>
    </location>
</feature>
<feature type="chain" id="PRO_0000001319" description="Hemolysin" evidence="3">
    <location>
        <begin position="313"/>
        <end position="1706"/>
    </location>
</feature>
<feature type="repeat" description="Hemolysin-type calcium-binding 1">
    <location>
        <begin position="1014"/>
        <end position="1031"/>
    </location>
</feature>
<feature type="repeat" description="Hemolysin-type calcium-binding 2">
    <location>
        <begin position="1032"/>
        <end position="1049"/>
    </location>
</feature>
<feature type="repeat" description="Hemolysin-type calcium-binding 3">
    <location>
        <begin position="1050"/>
        <end position="1067"/>
    </location>
</feature>
<feature type="repeat" description="Hemolysin-type calcium-binding 4">
    <location>
        <begin position="1155"/>
        <end position="1172"/>
    </location>
</feature>
<feature type="repeat" description="Hemolysin-type calcium-binding 5">
    <location>
        <begin position="1173"/>
        <end position="1190"/>
    </location>
</feature>
<feature type="repeat" description="Hemolysin-type calcium-binding 6">
    <location>
        <begin position="1279"/>
        <end position="1296"/>
    </location>
</feature>
<feature type="repeat" description="Hemolysin-type calcium-binding 7">
    <location>
        <begin position="1297"/>
        <end position="1314"/>
    </location>
</feature>
<feature type="repeat" description="Hemolysin-type calcium-binding 8">
    <location>
        <begin position="1315"/>
        <end position="1332"/>
    </location>
</feature>
<feature type="repeat" description="Hemolysin-type calcium-binding 9">
    <location>
        <begin position="1335"/>
        <end position="1352"/>
    </location>
</feature>
<feature type="repeat" description="Hemolysin-type calcium-binding 10">
    <location>
        <begin position="1411"/>
        <end position="1428"/>
    </location>
</feature>
<feature type="repeat" description="Hemolysin-type calcium-binding 11">
    <location>
        <begin position="1429"/>
        <end position="1446"/>
    </location>
</feature>
<feature type="repeat" description="Hemolysin-type calcium-binding 12">
    <location>
        <begin position="1447"/>
        <end position="1464"/>
    </location>
</feature>
<feature type="repeat" description="Hemolysin-type calcium-binding 13">
    <location>
        <begin position="1468"/>
        <end position="1484"/>
    </location>
</feature>
<feature type="repeat" description="Hemolysin-type calcium-binding 14">
    <location>
        <begin position="1537"/>
        <end position="1554"/>
    </location>
</feature>
<feature type="repeat" description="Hemolysin-type calcium-binding 15">
    <location>
        <begin position="1555"/>
        <end position="1572"/>
    </location>
</feature>
<feature type="repeat" description="Hemolysin-type calcium-binding 16">
    <location>
        <begin position="1573"/>
        <end position="1590"/>
    </location>
</feature>
<feature type="repeat" description="Hemolysin-type calcium-binding 17">
    <location>
        <begin position="1603"/>
        <end position="1620"/>
    </location>
</feature>
<feature type="region of interest" description="A, catalytic" evidence="2">
    <location>
        <begin position="1"/>
        <end position="399"/>
    </location>
</feature>
<feature type="region of interest" description="Disordered" evidence="4">
    <location>
        <begin position="367"/>
        <end position="405"/>
    </location>
</feature>
<feature type="region of interest" description="B, Ala/Gly-rich" evidence="2">
    <location>
        <begin position="400"/>
        <end position="912"/>
    </location>
</feature>
<feature type="region of interest" description="Required for interaction with CyaC" evidence="2">
    <location>
        <begin position="500"/>
        <end position="698"/>
    </location>
</feature>
<feature type="region of interest" description="C" evidence="2">
    <location>
        <begin position="913"/>
        <end position="1656"/>
    </location>
</feature>
<feature type="region of interest" description="D, Asp/Gly-rich" evidence="2">
    <location>
        <begin position="1657"/>
        <end position="1706"/>
    </location>
</feature>
<feature type="binding site" evidence="3">
    <location>
        <begin position="349"/>
        <end position="356"/>
    </location>
    <ligand>
        <name>ATP</name>
        <dbReference type="ChEBI" id="CHEBI:30616"/>
    </ligand>
</feature>
<feature type="lipid moiety-binding region" description="N6-palmitoyl lysine" evidence="2">
    <location>
        <position position="860"/>
    </location>
</feature>
<feature type="lipid moiety-binding region" description="N6-palmitoyl lysine" evidence="2">
    <location>
        <position position="983"/>
    </location>
</feature>
<feature type="sequence conflict" description="In Ref. 1; CAA85481." evidence="5" ref="1">
    <original>A</original>
    <variation>R</variation>
    <location>
        <position position="292"/>
    </location>
</feature>
<feature type="sequence conflict" description="In Ref. 1; CAA85481." evidence="5" ref="1">
    <original>G</original>
    <variation>R</variation>
    <location>
        <position position="371"/>
    </location>
</feature>
<feature type="sequence conflict" description="In Ref. 1; CAA85481." evidence="5" ref="1">
    <original>AA</original>
    <variation>G</variation>
    <location>
        <begin position="546"/>
        <end position="547"/>
    </location>
</feature>
<dbReference type="EC" id="4.6.1.1" evidence="2"/>
<dbReference type="EMBL" id="Z37112">
    <property type="protein sequence ID" value="CAA85481.2"/>
    <property type="molecule type" value="Genomic_DNA"/>
</dbReference>
<dbReference type="EMBL" id="BX640437">
    <property type="protein sequence ID" value="CAE30822.1"/>
    <property type="status" value="ALT_INIT"/>
    <property type="molecule type" value="Genomic_DNA"/>
</dbReference>
<dbReference type="PIR" id="S51672">
    <property type="entry name" value="S51672"/>
</dbReference>
<dbReference type="BMRB" id="Q57506"/>
<dbReference type="SMR" id="Q57506"/>
<dbReference type="KEGG" id="bbr:BB0324"/>
<dbReference type="eggNOG" id="COG2931">
    <property type="taxonomic scope" value="Bacteria"/>
</dbReference>
<dbReference type="HOGENOM" id="CLU_239696_0_0_4"/>
<dbReference type="Proteomes" id="UP000001027">
    <property type="component" value="Chromosome"/>
</dbReference>
<dbReference type="GO" id="GO:0005576">
    <property type="term" value="C:extracellular region"/>
    <property type="evidence" value="ECO:0007669"/>
    <property type="project" value="UniProtKB-SubCell"/>
</dbReference>
<dbReference type="GO" id="GO:0020002">
    <property type="term" value="C:host cell plasma membrane"/>
    <property type="evidence" value="ECO:0007669"/>
    <property type="project" value="UniProtKB-SubCell"/>
</dbReference>
<dbReference type="GO" id="GO:0016020">
    <property type="term" value="C:membrane"/>
    <property type="evidence" value="ECO:0007669"/>
    <property type="project" value="UniProtKB-KW"/>
</dbReference>
<dbReference type="GO" id="GO:0005524">
    <property type="term" value="F:ATP binding"/>
    <property type="evidence" value="ECO:0007669"/>
    <property type="project" value="UniProtKB-KW"/>
</dbReference>
<dbReference type="GO" id="GO:0005509">
    <property type="term" value="F:calcium ion binding"/>
    <property type="evidence" value="ECO:0007669"/>
    <property type="project" value="InterPro"/>
</dbReference>
<dbReference type="GO" id="GO:0008294">
    <property type="term" value="F:calcium- and calmodulin-responsive adenylate cyclase activity"/>
    <property type="evidence" value="ECO:0007669"/>
    <property type="project" value="InterPro"/>
</dbReference>
<dbReference type="GO" id="GO:0005516">
    <property type="term" value="F:calmodulin binding"/>
    <property type="evidence" value="ECO:0007669"/>
    <property type="project" value="UniProtKB-KW"/>
</dbReference>
<dbReference type="GO" id="GO:0015267">
    <property type="term" value="F:channel activity"/>
    <property type="evidence" value="ECO:0007669"/>
    <property type="project" value="InterPro"/>
</dbReference>
<dbReference type="GO" id="GO:0090729">
    <property type="term" value="F:toxin activity"/>
    <property type="evidence" value="ECO:0007669"/>
    <property type="project" value="UniProtKB-KW"/>
</dbReference>
<dbReference type="GO" id="GO:0006171">
    <property type="term" value="P:cAMP biosynthetic process"/>
    <property type="evidence" value="ECO:0007669"/>
    <property type="project" value="UniProtKB-KW"/>
</dbReference>
<dbReference type="GO" id="GO:0031640">
    <property type="term" value="P:killing of cells of another organism"/>
    <property type="evidence" value="ECO:0007669"/>
    <property type="project" value="UniProtKB-KW"/>
</dbReference>
<dbReference type="FunFam" id="2.150.10.10:FF:000003">
    <property type="entry name" value="Bifunctional hemolysin/adenylate cyclase"/>
    <property type="match status" value="3"/>
</dbReference>
<dbReference type="Gene3D" id="1.10.150.920">
    <property type="match status" value="1"/>
</dbReference>
<dbReference type="Gene3D" id="3.30.70.1720">
    <property type="match status" value="1"/>
</dbReference>
<dbReference type="Gene3D" id="3.90.1760.10">
    <property type="entry name" value="Anthrax toxin, edema factor, central domain"/>
    <property type="match status" value="1"/>
</dbReference>
<dbReference type="Gene3D" id="2.150.10.10">
    <property type="entry name" value="Serralysin-like metalloprotease, C-terminal"/>
    <property type="match status" value="5"/>
</dbReference>
<dbReference type="InterPro" id="IPR035099">
    <property type="entry name" value="Anthrax_toxin_C-terminal"/>
</dbReference>
<dbReference type="InterPro" id="IPR005165">
    <property type="entry name" value="Anthrax_toxin_edema_cen"/>
</dbReference>
<dbReference type="InterPro" id="IPR037017">
    <property type="entry name" value="Anthrax_toxin_edema_cen_sf"/>
</dbReference>
<dbReference type="InterPro" id="IPR010566">
    <property type="entry name" value="Haemolys_ca-bd"/>
</dbReference>
<dbReference type="InterPro" id="IPR018511">
    <property type="entry name" value="Hemolysin-typ_Ca-bd_CS"/>
</dbReference>
<dbReference type="InterPro" id="IPR001343">
    <property type="entry name" value="Hemolysn_Ca-bd"/>
</dbReference>
<dbReference type="InterPro" id="IPR018504">
    <property type="entry name" value="RTX_pore_form"/>
</dbReference>
<dbReference type="InterPro" id="IPR050557">
    <property type="entry name" value="RTX_toxin/Mannuronan_C5-epim"/>
</dbReference>
<dbReference type="InterPro" id="IPR003995">
    <property type="entry name" value="RTX_toxin_determinant-A"/>
</dbReference>
<dbReference type="InterPro" id="IPR011049">
    <property type="entry name" value="Serralysin-like_metalloprot_C"/>
</dbReference>
<dbReference type="PANTHER" id="PTHR38340">
    <property type="entry name" value="S-LAYER PROTEIN"/>
    <property type="match status" value="1"/>
</dbReference>
<dbReference type="PANTHER" id="PTHR38340:SF1">
    <property type="entry name" value="S-LAYER PROTEIN"/>
    <property type="match status" value="1"/>
</dbReference>
<dbReference type="Pfam" id="PF03497">
    <property type="entry name" value="Anthrax_toxA"/>
    <property type="match status" value="1"/>
</dbReference>
<dbReference type="Pfam" id="PF06594">
    <property type="entry name" value="HCBP_related"/>
    <property type="match status" value="1"/>
</dbReference>
<dbReference type="Pfam" id="PF00353">
    <property type="entry name" value="HemolysinCabind"/>
    <property type="match status" value="8"/>
</dbReference>
<dbReference type="Pfam" id="PF02382">
    <property type="entry name" value="RTX"/>
    <property type="match status" value="1"/>
</dbReference>
<dbReference type="PRINTS" id="PR00313">
    <property type="entry name" value="CABNDNGRPT"/>
</dbReference>
<dbReference type="PRINTS" id="PR01488">
    <property type="entry name" value="RTXTOXINA"/>
</dbReference>
<dbReference type="SUPFAM" id="SSF81298">
    <property type="entry name" value="Adenylylcyclase toxin (the edema factor)"/>
    <property type="match status" value="1"/>
</dbReference>
<dbReference type="SUPFAM" id="SSF51120">
    <property type="entry name" value="beta-Roll"/>
    <property type="match status" value="5"/>
</dbReference>
<dbReference type="PROSITE" id="PS00330">
    <property type="entry name" value="HEMOLYSIN_CALCIUM"/>
    <property type="match status" value="5"/>
</dbReference>
<gene>
    <name type="primary">cya</name>
    <name type="synonym">cyaA</name>
    <name type="ordered locus">BB0324</name>
</gene>
<reference key="1">
    <citation type="journal article" date="1995" name="Gene">
        <title>Cloning and sequence of the Bordetella bronchiseptica adenylate cyclase-hemolysin-encoding gene: comparison with the Bordetella pertussis gene.</title>
        <authorList>
            <person name="Betsou F."/>
            <person name="Sismeiro O."/>
            <person name="Danchin A."/>
            <person name="Guiso N."/>
        </authorList>
    </citation>
    <scope>NUCLEOTIDE SEQUENCE [GENOMIC DNA]</scope>
    <source>
        <strain>CIP 9.73</strain>
    </source>
</reference>
<reference key="2">
    <citation type="submission" date="2000-12" db="EMBL/GenBank/DDBJ databases">
        <authorList>
            <person name="Danchin A."/>
            <person name="Boursaux-Eude C."/>
        </authorList>
    </citation>
    <scope>SEQUENCE REVISION TO 1556-1559</scope>
</reference>
<reference key="3">
    <citation type="journal article" date="2003" name="Nat. Genet.">
        <title>Comparative analysis of the genome sequences of Bordetella pertussis, Bordetella parapertussis and Bordetella bronchiseptica.</title>
        <authorList>
            <person name="Parkhill J."/>
            <person name="Sebaihia M."/>
            <person name="Preston A."/>
            <person name="Murphy L.D."/>
            <person name="Thomson N.R."/>
            <person name="Harris D.E."/>
            <person name="Holden M.T.G."/>
            <person name="Churcher C.M."/>
            <person name="Bentley S.D."/>
            <person name="Mungall K.L."/>
            <person name="Cerdeno-Tarraga A.-M."/>
            <person name="Temple L."/>
            <person name="James K.D."/>
            <person name="Harris B."/>
            <person name="Quail M.A."/>
            <person name="Achtman M."/>
            <person name="Atkin R."/>
            <person name="Baker S."/>
            <person name="Basham D."/>
            <person name="Bason N."/>
            <person name="Cherevach I."/>
            <person name="Chillingworth T."/>
            <person name="Collins M."/>
            <person name="Cronin A."/>
            <person name="Davis P."/>
            <person name="Doggett J."/>
            <person name="Feltwell T."/>
            <person name="Goble A."/>
            <person name="Hamlin N."/>
            <person name="Hauser H."/>
            <person name="Holroyd S."/>
            <person name="Jagels K."/>
            <person name="Leather S."/>
            <person name="Moule S."/>
            <person name="Norberczak H."/>
            <person name="O'Neil S."/>
            <person name="Ormond D."/>
            <person name="Price C."/>
            <person name="Rabbinowitsch E."/>
            <person name="Rutter S."/>
            <person name="Sanders M."/>
            <person name="Saunders D."/>
            <person name="Seeger K."/>
            <person name="Sharp S."/>
            <person name="Simmonds M."/>
            <person name="Skelton J."/>
            <person name="Squares R."/>
            <person name="Squares S."/>
            <person name="Stevens K."/>
            <person name="Unwin L."/>
            <person name="Whitehead S."/>
            <person name="Barrell B.G."/>
            <person name="Maskell D.J."/>
        </authorList>
    </citation>
    <scope>NUCLEOTIDE SEQUENCE [LARGE SCALE GENOMIC DNA]</scope>
    <source>
        <strain>ATCC BAA-588 / NCTC 13252 / RB50</strain>
    </source>
</reference>
<protein>
    <recommendedName>
        <fullName>Bifunctional hemolysin/adenylate cyclase</fullName>
    </recommendedName>
    <alternativeName>
        <fullName>AC-HLY</fullName>
    </alternativeName>
    <alternativeName>
        <fullName>ACT</fullName>
    </alternativeName>
    <alternativeName>
        <fullName>Cyclolysin</fullName>
    </alternativeName>
    <component>
        <recommendedName>
            <fullName>Calmodulin-sensitive adenylate cyclase</fullName>
            <ecNumber evidence="2">4.6.1.1</ecNumber>
        </recommendedName>
        <alternativeName>
            <fullName>ATP pyrophosphate-lyase</fullName>
        </alternativeName>
        <alternativeName>
            <fullName>Adenylyl cyclase</fullName>
        </alternativeName>
    </component>
    <component>
        <recommendedName>
            <fullName>Hemolysin</fullName>
        </recommendedName>
    </component>
</protein>
<organism>
    <name type="scientific">Bordetella bronchiseptica (strain ATCC BAA-588 / NCTC 13252 / RB50)</name>
    <name type="common">Alcaligenes bronchisepticus</name>
    <dbReference type="NCBI Taxonomy" id="257310"/>
    <lineage>
        <taxon>Bacteria</taxon>
        <taxon>Pseudomonadati</taxon>
        <taxon>Pseudomonadota</taxon>
        <taxon>Betaproteobacteria</taxon>
        <taxon>Burkholderiales</taxon>
        <taxon>Alcaligenaceae</taxon>
        <taxon>Bordetella</taxon>
    </lineage>
</organism>
<accession>Q57506</accession>
<accession>O05179</accession>
<sequence length="1706" mass="177056">MQQSHQAGYANAADRESGIPAAVLDGIKAVAKEKNATLMFRLVNPHSTSLIAEGVATKGLGVHAKSSDWGLQAGYIPVNPNLSKLFGRAPEVIARADNDVNSSLAHGHTAVDLTLSKERLDYLRQAGLVTGMADGVVASNHAGYEQFEFRVKETSDGRYAVQYRRKGGDDFEAVKVIGNAAGIPLTADIDMFAIMPHLSNFRDSARSSVTSGDSVTDYLARTRRAASEATGGLDRERIDLLWKIARAGARSAVGTEARRQFRYDGDMNIGVITDFELEVRNALNRRAHAVGAQDVVQHGTEQNNPFPEADEKIFVVSATGESQMLTRGQLKEYIGQQRGEGYVFYENRAYGVAGKSLFDDGLGAAPGVPGGRSKSSPDVLETVPASPGLRRPSLGAVERQDSGYDSLDGVGSRSFSLGEVSDMAAVEAAELEMTRQVLHAGARQDDAEPGVSGASAHWGQRALQGAQAVAAAQRLVHAIALMTQFGRAGSTNTPQEAASLSAAVFGLGEASSAVAETVSGFFRGSSRWAGGFGVAGGAMALGGGIAAAVGAGMSLTDDAPAGQKAAAGAEIALQLTGGTVELASSIALALAAARGVTSGLQVAGASAGAAAGALAAALSPMEIYGLVQQSHYADQLDKLAQESSAYGYEGDALLAQLYRDKTAAEGAVAGVSAVLSTVGAAVSIAAAASVVGAPVAVVTSLLTGALNGILRGVQQPIIEKLANDYARKIDELGGPQAYFEKNLQARHEQLANSDGLRKMLADLQAGWNASSVIGVQTTEISKSALELAAITGNADNLKSADVFVDRFIQGERVAGQPVVLDVAAGGIDIASRKGERPALTFITPLAAPGEEQRRRTKTGKSEFTTFVEIVGKQDRWRIRDGAADTTIDLAKVVSQLVDANGVLKHSIKLEVIGGDGDDVVLANASRIHYDGGAGTNTVSYAALGRQDSITVSADGERFNVRKQLNNANVYREGVATQKTAYGKRTENVQYRHVELARVGQLVEVDTLEHVQHIIGGAGNDSITGNAHDNFLAGGAGDDRLDGGAGNDTLVGGEGHNTVVGGAGDDVFLQDLGVWSNQLDGGAGVDTVKYNVHQPSEERLERMGDTGIHADLQKGTVEKWPALNLFSVDHVKNIENLHGSSLNDSIAGDDRDNELWGDDGNDTIHGRGGDDILRGGLGLDTLYGEDGNDIFLQDDETVSDDIDGGAGLDTVDYSAMIHAGKIVAPHEYGFGIEADLSEGWVRKAARRGMDYYDSVRSVENVIGTSMKDVLIGDAQANTLMGQGGDDTVRGGDGDDLLFGGDGNDMLYGDAGNDTLYGGLGDDTLEGGAGNDWFGQTPAREHDVLRGGAGVDTVDYSQAGAHAGVATGRIGLGILADLGAGRVDKLGEAGSSAYDTVSGIENVVGTELADRITGDAQANVLRGAGGADVLAGGEGDDVLLGGDGDDQLSGDAGRDRLYGEAGDDWFFQDAANAGNLLDGGDGNDTVDFSGPGRGLDAGAKGVFLSLGKGFASLMDEPETSNVLRHIENAVGSVRDDVLIGDAGANVLNGLAGNDVLSGGAGDDVLLGDEGSDLLSGDAGNDDLFGGQGDDTYLFGAGYGHDTIYESGGGHDTIRINAGADQLWFARQGNDLEIRILGTDDALTVHDWYRDADHRVEAIHAANQAIDPAGIEKLVEAMAQYPDPGAAAAAPPAARVPDTLMQSLAVNWR</sequence>
<evidence type="ECO:0000250" key="1">
    <source>
        <dbReference type="UniProtKB" id="J7QLC0"/>
    </source>
</evidence>
<evidence type="ECO:0000250" key="2">
    <source>
        <dbReference type="UniProtKB" id="P0DKX7"/>
    </source>
</evidence>
<evidence type="ECO:0000255" key="3"/>
<evidence type="ECO:0000256" key="4">
    <source>
        <dbReference type="SAM" id="MobiDB-lite"/>
    </source>
</evidence>
<evidence type="ECO:0000305" key="5"/>
<proteinExistence type="inferred from homology"/>
<keyword id="KW-0067">ATP-binding</keyword>
<keyword id="KW-0106">Calcium</keyword>
<keyword id="KW-0112">Calmodulin-binding</keyword>
<keyword id="KW-0115">cAMP biosynthesis</keyword>
<keyword id="KW-0204">Cytolysis</keyword>
<keyword id="KW-0354">Hemolysis</keyword>
<keyword id="KW-1032">Host cell membrane</keyword>
<keyword id="KW-1043">Host membrane</keyword>
<keyword id="KW-0449">Lipoprotein</keyword>
<keyword id="KW-0456">Lyase</keyword>
<keyword id="KW-0472">Membrane</keyword>
<keyword id="KW-0519">Myristate</keyword>
<keyword id="KW-0547">Nucleotide-binding</keyword>
<keyword id="KW-0564">Palmitate</keyword>
<keyword id="KW-0677">Repeat</keyword>
<keyword id="KW-0964">Secreted</keyword>
<keyword id="KW-0800">Toxin</keyword>
<keyword id="KW-0812">Transmembrane</keyword>
<keyword id="KW-0843">Virulence</keyword>
<keyword id="KW-0855">Whooping cough</keyword>